<protein>
    <recommendedName>
        <fullName evidence="5">Kinesin-like protein KIN-14J</fullName>
    </recommendedName>
</protein>
<keyword id="KW-0067">ATP-binding</keyword>
<keyword id="KW-0175">Coiled coil</keyword>
<keyword id="KW-0493">Microtubule</keyword>
<keyword id="KW-0505">Motor protein</keyword>
<keyword id="KW-0547">Nucleotide-binding</keyword>
<keyword id="KW-1185">Reference proteome</keyword>
<sequence>MEADPAPSSTPPPSSPAPAASPSRHPPGEEGGGAERVEVEEYVDPPSPDCCGGADPDHAPPPSPKGEEPVVSAEEEQAAVAGGEGEALRSFLEEFGDQGDDSLVPSPKLKQINTPDRLAALRFLGGKYNSLLERYKQQVAKCAEECAPRYDGLKKKYADECAERRRLYNELIELRGNIRVFCRCRPLSTAEISNGCSSIVQIDPSHETELQFVPSDKDRKAFKFDHVFGPSDNQETVFAESLPVVRSVMDGFNVCIFAYGQTGTGKTFTMEGIPEDRGVNYRALEELFRLSEERSSSVAYTFAVSILEVYNEKIRDLLDESSEQTGRKLDIKQTADGTQEVAGLIEAPIYTIDGVWEKLKVGAKNRSVGATSANELSSRSHSLVKVTVRSEHLVTGQKWRSHIWLVDLAGSERVNKTEVEGDRLKESQFINKSLSALGDVISALASKNAHIPYRNSKLTHLLQSSLGGDCKTLMFVQISPSSADSGETLCSLNFASRVRAIDHGPARKQADPAETFKLKQMTEKIRHEEKENAKLLESLQLTQLKYASRENVIKTLQEKIREAEQTSKTYQQRVRELENELANEKKAARDTARSTKPPLAPMRQRPPLGRIGNHIPPKAPLRLRLSKAPTIQNKENIPVMLNKGSSGADTSKAVAGKARRVSLTPVIRHIPLQPKRRSSLAVLPTQREQLSIFPDKRSVSRLSHIQMPRRSIATFNSIPATPLAAAAHKQVDGTPEARQLRRIEFSSSKFRSPPALARFNSRNNALSPQQKLRLASGSGNASKICFSVQKRVILGSPAPVKSSLLSGTGIFNPALREKMMAAKIGNAQRVFNTNRRKSVL</sequence>
<accession>Q75HV1</accession>
<name>KN14J_ORYSJ</name>
<proteinExistence type="evidence at transcript level"/>
<gene>
    <name evidence="5" type="primary">KIN14J</name>
    <name evidence="8" type="ordered locus">Os05g0397900</name>
    <name evidence="5" type="ordered locus">LOC_Os05g33030</name>
    <name evidence="9" type="ORF">OsJ_18460</name>
    <name evidence="6" type="ORF">OSJNBb0092G21.14</name>
    <name evidence="7" type="ORF">P0605G01.4</name>
</gene>
<comment type="similarity">
    <text evidence="4">Belongs to the TRAFAC class myosin-kinesin ATPase superfamily. Kinesin family. KIN-14 subfamily.</text>
</comment>
<organism>
    <name type="scientific">Oryza sativa subsp. japonica</name>
    <name type="common">Rice</name>
    <dbReference type="NCBI Taxonomy" id="39947"/>
    <lineage>
        <taxon>Eukaryota</taxon>
        <taxon>Viridiplantae</taxon>
        <taxon>Streptophyta</taxon>
        <taxon>Embryophyta</taxon>
        <taxon>Tracheophyta</taxon>
        <taxon>Spermatophyta</taxon>
        <taxon>Magnoliopsida</taxon>
        <taxon>Liliopsida</taxon>
        <taxon>Poales</taxon>
        <taxon>Poaceae</taxon>
        <taxon>BOP clade</taxon>
        <taxon>Oryzoideae</taxon>
        <taxon>Oryzeae</taxon>
        <taxon>Oryzinae</taxon>
        <taxon>Oryza</taxon>
        <taxon>Oryza sativa</taxon>
    </lineage>
</organism>
<evidence type="ECO:0000255" key="1"/>
<evidence type="ECO:0000255" key="2">
    <source>
        <dbReference type="PROSITE-ProRule" id="PRU00283"/>
    </source>
</evidence>
<evidence type="ECO:0000256" key="3">
    <source>
        <dbReference type="SAM" id="MobiDB-lite"/>
    </source>
</evidence>
<evidence type="ECO:0000303" key="4">
    <source>
    </source>
</evidence>
<evidence type="ECO:0000305" key="5"/>
<evidence type="ECO:0000312" key="6">
    <source>
        <dbReference type="EMBL" id="AAT07647.1"/>
    </source>
</evidence>
<evidence type="ECO:0000312" key="7">
    <source>
        <dbReference type="EMBL" id="AAU10796.1"/>
    </source>
</evidence>
<evidence type="ECO:0000312" key="8">
    <source>
        <dbReference type="EMBL" id="BAS93896.1"/>
    </source>
</evidence>
<evidence type="ECO:0000312" key="9">
    <source>
        <dbReference type="EMBL" id="EEE63643.1"/>
    </source>
</evidence>
<feature type="chain" id="PRO_0000438635" description="Kinesin-like protein KIN-14J">
    <location>
        <begin position="1"/>
        <end position="840"/>
    </location>
</feature>
<feature type="domain" description="Kinesin motor" evidence="2">
    <location>
        <begin position="177"/>
        <end position="501"/>
    </location>
</feature>
<feature type="region of interest" description="Disordered" evidence="3">
    <location>
        <begin position="1"/>
        <end position="74"/>
    </location>
</feature>
<feature type="region of interest" description="Disordered" evidence="3">
    <location>
        <begin position="581"/>
        <end position="617"/>
    </location>
</feature>
<feature type="coiled-coil region" evidence="1">
    <location>
        <begin position="517"/>
        <end position="594"/>
    </location>
</feature>
<feature type="compositionally biased region" description="Basic and acidic residues" evidence="3">
    <location>
        <begin position="581"/>
        <end position="593"/>
    </location>
</feature>
<feature type="binding site" evidence="2">
    <location>
        <begin position="260"/>
        <end position="267"/>
    </location>
    <ligand>
        <name>ATP</name>
        <dbReference type="ChEBI" id="CHEBI:30616"/>
    </ligand>
</feature>
<dbReference type="EMBL" id="AC132492">
    <property type="protein sequence ID" value="AAU10796.1"/>
    <property type="molecule type" value="Genomic_DNA"/>
</dbReference>
<dbReference type="EMBL" id="AC134932">
    <property type="protein sequence ID" value="AAT07647.1"/>
    <property type="molecule type" value="Genomic_DNA"/>
</dbReference>
<dbReference type="EMBL" id="AP008211">
    <property type="protein sequence ID" value="BAF17384.1"/>
    <property type="molecule type" value="Genomic_DNA"/>
</dbReference>
<dbReference type="EMBL" id="AP014961">
    <property type="protein sequence ID" value="BAS93896.1"/>
    <property type="molecule type" value="Genomic_DNA"/>
</dbReference>
<dbReference type="EMBL" id="CM000142">
    <property type="protein sequence ID" value="EEE63643.1"/>
    <property type="molecule type" value="Genomic_DNA"/>
</dbReference>
<dbReference type="EMBL" id="AK102894">
    <property type="protein sequence ID" value="BAG95768.1"/>
    <property type="molecule type" value="mRNA"/>
</dbReference>
<dbReference type="RefSeq" id="XP_015640467.1">
    <property type="nucleotide sequence ID" value="XM_015784981.1"/>
</dbReference>
<dbReference type="SMR" id="Q75HV1"/>
<dbReference type="FunCoup" id="Q75HV1">
    <property type="interactions" value="135"/>
</dbReference>
<dbReference type="STRING" id="39947.Q75HV1"/>
<dbReference type="iPTMnet" id="Q75HV1"/>
<dbReference type="PaxDb" id="39947-Q75HV1"/>
<dbReference type="EnsemblPlants" id="Os05t0397900-01">
    <property type="protein sequence ID" value="Os05t0397900-01"/>
    <property type="gene ID" value="Os05g0397900"/>
</dbReference>
<dbReference type="Gramene" id="Os05t0397900-01">
    <property type="protein sequence ID" value="Os05t0397900-01"/>
    <property type="gene ID" value="Os05g0397900"/>
</dbReference>
<dbReference type="KEGG" id="dosa:Os05g0397900"/>
<dbReference type="KEGG" id="osa:4338710"/>
<dbReference type="eggNOG" id="KOG0239">
    <property type="taxonomic scope" value="Eukaryota"/>
</dbReference>
<dbReference type="HOGENOM" id="CLU_007631_2_1_1"/>
<dbReference type="InParanoid" id="Q75HV1"/>
<dbReference type="OMA" id="HIWLVDL"/>
<dbReference type="Proteomes" id="UP000000763">
    <property type="component" value="Chromosome 5"/>
</dbReference>
<dbReference type="Proteomes" id="UP000007752">
    <property type="component" value="Chromosome 5"/>
</dbReference>
<dbReference type="Proteomes" id="UP000059680">
    <property type="component" value="Chromosome 5"/>
</dbReference>
<dbReference type="GO" id="GO:0005737">
    <property type="term" value="C:cytoplasm"/>
    <property type="evidence" value="ECO:0000318"/>
    <property type="project" value="GO_Central"/>
</dbReference>
<dbReference type="GO" id="GO:0005871">
    <property type="term" value="C:kinesin complex"/>
    <property type="evidence" value="ECO:0000318"/>
    <property type="project" value="GO_Central"/>
</dbReference>
<dbReference type="GO" id="GO:0005874">
    <property type="term" value="C:microtubule"/>
    <property type="evidence" value="ECO:0000318"/>
    <property type="project" value="GO_Central"/>
</dbReference>
<dbReference type="GO" id="GO:0005524">
    <property type="term" value="F:ATP binding"/>
    <property type="evidence" value="ECO:0007669"/>
    <property type="project" value="UniProtKB-KW"/>
</dbReference>
<dbReference type="GO" id="GO:0016887">
    <property type="term" value="F:ATP hydrolysis activity"/>
    <property type="evidence" value="ECO:0000318"/>
    <property type="project" value="GO_Central"/>
</dbReference>
<dbReference type="GO" id="GO:0008017">
    <property type="term" value="F:microtubule binding"/>
    <property type="evidence" value="ECO:0000318"/>
    <property type="project" value="GO_Central"/>
</dbReference>
<dbReference type="GO" id="GO:0003777">
    <property type="term" value="F:microtubule motor activity"/>
    <property type="evidence" value="ECO:0000318"/>
    <property type="project" value="GO_Central"/>
</dbReference>
<dbReference type="GO" id="GO:0007018">
    <property type="term" value="P:microtubule-based movement"/>
    <property type="evidence" value="ECO:0000318"/>
    <property type="project" value="GO_Central"/>
</dbReference>
<dbReference type="GO" id="GO:0051225">
    <property type="term" value="P:spindle assembly"/>
    <property type="evidence" value="ECO:0000318"/>
    <property type="project" value="GO_Central"/>
</dbReference>
<dbReference type="CDD" id="cd01366">
    <property type="entry name" value="KISc_C_terminal"/>
    <property type="match status" value="1"/>
</dbReference>
<dbReference type="FunFam" id="3.40.850.10:FF:000061">
    <property type="entry name" value="Kinesin-like protein"/>
    <property type="match status" value="1"/>
</dbReference>
<dbReference type="Gene3D" id="3.40.850.10">
    <property type="entry name" value="Kinesin motor domain"/>
    <property type="match status" value="1"/>
</dbReference>
<dbReference type="InterPro" id="IPR027640">
    <property type="entry name" value="Kinesin-like_fam"/>
</dbReference>
<dbReference type="InterPro" id="IPR019821">
    <property type="entry name" value="Kinesin_motor_CS"/>
</dbReference>
<dbReference type="InterPro" id="IPR001752">
    <property type="entry name" value="Kinesin_motor_dom"/>
</dbReference>
<dbReference type="InterPro" id="IPR036961">
    <property type="entry name" value="Kinesin_motor_dom_sf"/>
</dbReference>
<dbReference type="InterPro" id="IPR027417">
    <property type="entry name" value="P-loop_NTPase"/>
</dbReference>
<dbReference type="PANTHER" id="PTHR47972:SF2">
    <property type="entry name" value="KINESIN-LIKE PROTEIN KIN-14S"/>
    <property type="match status" value="1"/>
</dbReference>
<dbReference type="PANTHER" id="PTHR47972">
    <property type="entry name" value="KINESIN-LIKE PROTEIN KLP-3"/>
    <property type="match status" value="1"/>
</dbReference>
<dbReference type="Pfam" id="PF00225">
    <property type="entry name" value="Kinesin"/>
    <property type="match status" value="1"/>
</dbReference>
<dbReference type="PRINTS" id="PR00380">
    <property type="entry name" value="KINESINHEAVY"/>
</dbReference>
<dbReference type="SMART" id="SM00129">
    <property type="entry name" value="KISc"/>
    <property type="match status" value="1"/>
</dbReference>
<dbReference type="SUPFAM" id="SSF52540">
    <property type="entry name" value="P-loop containing nucleoside triphosphate hydrolases"/>
    <property type="match status" value="1"/>
</dbReference>
<dbReference type="PROSITE" id="PS00411">
    <property type="entry name" value="KINESIN_MOTOR_1"/>
    <property type="match status" value="1"/>
</dbReference>
<dbReference type="PROSITE" id="PS50067">
    <property type="entry name" value="KINESIN_MOTOR_2"/>
    <property type="match status" value="1"/>
</dbReference>
<reference key="1">
    <citation type="journal article" date="2005" name="Mol. Genet. Genomics">
        <title>A fine physical map of the rice chromosome 5.</title>
        <authorList>
            <person name="Cheng C.-H."/>
            <person name="Chung M.C."/>
            <person name="Liu S.-M."/>
            <person name="Chen S.-K."/>
            <person name="Kao F.Y."/>
            <person name="Lin S.-J."/>
            <person name="Hsiao S.-H."/>
            <person name="Tseng I.C."/>
            <person name="Hsing Y.-I.C."/>
            <person name="Wu H.-P."/>
            <person name="Chen C.-S."/>
            <person name="Shaw J.-F."/>
            <person name="Wu J."/>
            <person name="Matsumoto T."/>
            <person name="Sasaki T."/>
            <person name="Chen H.-C."/>
            <person name="Chow T.-Y."/>
        </authorList>
    </citation>
    <scope>NUCLEOTIDE SEQUENCE [LARGE SCALE GENOMIC DNA]</scope>
    <source>
        <strain>cv. Nipponbare</strain>
    </source>
</reference>
<reference key="2">
    <citation type="journal article" date="2005" name="Nature">
        <title>The map-based sequence of the rice genome.</title>
        <authorList>
            <consortium name="International rice genome sequencing project (IRGSP)"/>
        </authorList>
    </citation>
    <scope>NUCLEOTIDE SEQUENCE [LARGE SCALE GENOMIC DNA]</scope>
    <source>
        <strain>cv. Nipponbare</strain>
    </source>
</reference>
<reference key="3">
    <citation type="journal article" date="2008" name="Nucleic Acids Res.">
        <title>The rice annotation project database (RAP-DB): 2008 update.</title>
        <authorList>
            <consortium name="The rice annotation project (RAP)"/>
        </authorList>
    </citation>
    <scope>GENOME REANNOTATION</scope>
    <source>
        <strain>cv. Nipponbare</strain>
    </source>
</reference>
<reference key="4">
    <citation type="journal article" date="2013" name="Rice">
        <title>Improvement of the Oryza sativa Nipponbare reference genome using next generation sequence and optical map data.</title>
        <authorList>
            <person name="Kawahara Y."/>
            <person name="de la Bastide M."/>
            <person name="Hamilton J.P."/>
            <person name="Kanamori H."/>
            <person name="McCombie W.R."/>
            <person name="Ouyang S."/>
            <person name="Schwartz D.C."/>
            <person name="Tanaka T."/>
            <person name="Wu J."/>
            <person name="Zhou S."/>
            <person name="Childs K.L."/>
            <person name="Davidson R.M."/>
            <person name="Lin H."/>
            <person name="Quesada-Ocampo L."/>
            <person name="Vaillancourt B."/>
            <person name="Sakai H."/>
            <person name="Lee S.S."/>
            <person name="Kim J."/>
            <person name="Numa H."/>
            <person name="Itoh T."/>
            <person name="Buell C.R."/>
            <person name="Matsumoto T."/>
        </authorList>
    </citation>
    <scope>GENOME REANNOTATION</scope>
    <source>
        <strain>cv. Nipponbare</strain>
    </source>
</reference>
<reference key="5">
    <citation type="journal article" date="2005" name="PLoS Biol.">
        <title>The genomes of Oryza sativa: a history of duplications.</title>
        <authorList>
            <person name="Yu J."/>
            <person name="Wang J."/>
            <person name="Lin W."/>
            <person name="Li S."/>
            <person name="Li H."/>
            <person name="Zhou J."/>
            <person name="Ni P."/>
            <person name="Dong W."/>
            <person name="Hu S."/>
            <person name="Zeng C."/>
            <person name="Zhang J."/>
            <person name="Zhang Y."/>
            <person name="Li R."/>
            <person name="Xu Z."/>
            <person name="Li S."/>
            <person name="Li X."/>
            <person name="Zheng H."/>
            <person name="Cong L."/>
            <person name="Lin L."/>
            <person name="Yin J."/>
            <person name="Geng J."/>
            <person name="Li G."/>
            <person name="Shi J."/>
            <person name="Liu J."/>
            <person name="Lv H."/>
            <person name="Li J."/>
            <person name="Wang J."/>
            <person name="Deng Y."/>
            <person name="Ran L."/>
            <person name="Shi X."/>
            <person name="Wang X."/>
            <person name="Wu Q."/>
            <person name="Li C."/>
            <person name="Ren X."/>
            <person name="Wang J."/>
            <person name="Wang X."/>
            <person name="Li D."/>
            <person name="Liu D."/>
            <person name="Zhang X."/>
            <person name="Ji Z."/>
            <person name="Zhao W."/>
            <person name="Sun Y."/>
            <person name="Zhang Z."/>
            <person name="Bao J."/>
            <person name="Han Y."/>
            <person name="Dong L."/>
            <person name="Ji J."/>
            <person name="Chen P."/>
            <person name="Wu S."/>
            <person name="Liu J."/>
            <person name="Xiao Y."/>
            <person name="Bu D."/>
            <person name="Tan J."/>
            <person name="Yang L."/>
            <person name="Ye C."/>
            <person name="Zhang J."/>
            <person name="Xu J."/>
            <person name="Zhou Y."/>
            <person name="Yu Y."/>
            <person name="Zhang B."/>
            <person name="Zhuang S."/>
            <person name="Wei H."/>
            <person name="Liu B."/>
            <person name="Lei M."/>
            <person name="Yu H."/>
            <person name="Li Y."/>
            <person name="Xu H."/>
            <person name="Wei S."/>
            <person name="He X."/>
            <person name="Fang L."/>
            <person name="Zhang Z."/>
            <person name="Zhang Y."/>
            <person name="Huang X."/>
            <person name="Su Z."/>
            <person name="Tong W."/>
            <person name="Li J."/>
            <person name="Tong Z."/>
            <person name="Li S."/>
            <person name="Ye J."/>
            <person name="Wang L."/>
            <person name="Fang L."/>
            <person name="Lei T."/>
            <person name="Chen C.-S."/>
            <person name="Chen H.-C."/>
            <person name="Xu Z."/>
            <person name="Li H."/>
            <person name="Huang H."/>
            <person name="Zhang F."/>
            <person name="Xu H."/>
            <person name="Li N."/>
            <person name="Zhao C."/>
            <person name="Li S."/>
            <person name="Dong L."/>
            <person name="Huang Y."/>
            <person name="Li L."/>
            <person name="Xi Y."/>
            <person name="Qi Q."/>
            <person name="Li W."/>
            <person name="Zhang B."/>
            <person name="Hu W."/>
            <person name="Zhang Y."/>
            <person name="Tian X."/>
            <person name="Jiao Y."/>
            <person name="Liang X."/>
            <person name="Jin J."/>
            <person name="Gao L."/>
            <person name="Zheng W."/>
            <person name="Hao B."/>
            <person name="Liu S.-M."/>
            <person name="Wang W."/>
            <person name="Yuan L."/>
            <person name="Cao M."/>
            <person name="McDermott J."/>
            <person name="Samudrala R."/>
            <person name="Wang J."/>
            <person name="Wong G.K.-S."/>
            <person name="Yang H."/>
        </authorList>
    </citation>
    <scope>NUCLEOTIDE SEQUENCE [LARGE SCALE GENOMIC DNA]</scope>
    <source>
        <strain>cv. Nipponbare</strain>
    </source>
</reference>
<reference key="6">
    <citation type="journal article" date="2003" name="Science">
        <title>Collection, mapping, and annotation of over 28,000 cDNA clones from japonica rice.</title>
        <authorList>
            <consortium name="The rice full-length cDNA consortium"/>
        </authorList>
    </citation>
    <scope>NUCLEOTIDE SEQUENCE [LARGE SCALE MRNA]</scope>
    <source>
        <strain>cv. Nipponbare</strain>
    </source>
</reference>
<reference key="7">
    <citation type="journal article" date="2009" name="Ann. Bot.">
        <title>Evaluating the microtubule cytoskeleton and its interacting proteins in monocots by mining the rice genome.</title>
        <authorList>
            <person name="Guo L."/>
            <person name="Ho C.M."/>
            <person name="Kong Z."/>
            <person name="Lee Y.R."/>
            <person name="Qian Q."/>
            <person name="Liu B."/>
        </authorList>
    </citation>
    <scope>GENE FAMILY</scope>
    <scope>NOMENCLATURE</scope>
</reference>